<keyword id="KW-0687">Ribonucleoprotein</keyword>
<keyword id="KW-0689">Ribosomal protein</keyword>
<comment type="similarity">
    <text evidence="1">Belongs to the bacterial ribosomal protein bL34 family.</text>
</comment>
<gene>
    <name evidence="1" type="primary">rpmH</name>
    <name type="ordered locus">FTH_0169</name>
</gene>
<evidence type="ECO:0000255" key="1">
    <source>
        <dbReference type="HAMAP-Rule" id="MF_00391"/>
    </source>
</evidence>
<evidence type="ECO:0000305" key="2"/>
<name>RL34_FRATO</name>
<dbReference type="EMBL" id="CP000437">
    <property type="protein sequence ID" value="ABI82200.1"/>
    <property type="molecule type" value="Genomic_DNA"/>
</dbReference>
<dbReference type="RefSeq" id="WP_003014180.1">
    <property type="nucleotide sequence ID" value="NC_017463.1"/>
</dbReference>
<dbReference type="SMR" id="Q0BNY4"/>
<dbReference type="GeneID" id="93255665"/>
<dbReference type="KEGG" id="fth:FTH_0169"/>
<dbReference type="GO" id="GO:1990904">
    <property type="term" value="C:ribonucleoprotein complex"/>
    <property type="evidence" value="ECO:0007669"/>
    <property type="project" value="UniProtKB-KW"/>
</dbReference>
<dbReference type="GO" id="GO:0005840">
    <property type="term" value="C:ribosome"/>
    <property type="evidence" value="ECO:0007669"/>
    <property type="project" value="UniProtKB-KW"/>
</dbReference>
<dbReference type="GO" id="GO:0003735">
    <property type="term" value="F:structural constituent of ribosome"/>
    <property type="evidence" value="ECO:0007669"/>
    <property type="project" value="InterPro"/>
</dbReference>
<dbReference type="GO" id="GO:0006412">
    <property type="term" value="P:translation"/>
    <property type="evidence" value="ECO:0007669"/>
    <property type="project" value="UniProtKB-UniRule"/>
</dbReference>
<dbReference type="FunFam" id="1.10.287.3980:FF:000001">
    <property type="entry name" value="Mitochondrial ribosomal protein L34"/>
    <property type="match status" value="1"/>
</dbReference>
<dbReference type="Gene3D" id="1.10.287.3980">
    <property type="match status" value="1"/>
</dbReference>
<dbReference type="HAMAP" id="MF_00391">
    <property type="entry name" value="Ribosomal_bL34"/>
    <property type="match status" value="1"/>
</dbReference>
<dbReference type="InterPro" id="IPR000271">
    <property type="entry name" value="Ribosomal_bL34"/>
</dbReference>
<dbReference type="InterPro" id="IPR020939">
    <property type="entry name" value="Ribosomal_bL34_CS"/>
</dbReference>
<dbReference type="NCBIfam" id="TIGR01030">
    <property type="entry name" value="rpmH_bact"/>
    <property type="match status" value="1"/>
</dbReference>
<dbReference type="PANTHER" id="PTHR14503:SF4">
    <property type="entry name" value="LARGE RIBOSOMAL SUBUNIT PROTEIN BL34M"/>
    <property type="match status" value="1"/>
</dbReference>
<dbReference type="PANTHER" id="PTHR14503">
    <property type="entry name" value="MITOCHONDRIAL RIBOSOMAL PROTEIN 34 FAMILY MEMBER"/>
    <property type="match status" value="1"/>
</dbReference>
<dbReference type="Pfam" id="PF00468">
    <property type="entry name" value="Ribosomal_L34"/>
    <property type="match status" value="1"/>
</dbReference>
<dbReference type="PROSITE" id="PS00784">
    <property type="entry name" value="RIBOSOMAL_L34"/>
    <property type="match status" value="1"/>
</dbReference>
<sequence length="44" mass="5180">MKRTFQPSNLKRKRTHGFRARMKTLSGRKVIRNRRAKGRAKLAA</sequence>
<accession>Q0BNY4</accession>
<proteinExistence type="inferred from homology"/>
<feature type="chain" id="PRO_1000013342" description="Large ribosomal subunit protein bL34">
    <location>
        <begin position="1"/>
        <end position="44"/>
    </location>
</feature>
<protein>
    <recommendedName>
        <fullName evidence="1">Large ribosomal subunit protein bL34</fullName>
    </recommendedName>
    <alternativeName>
        <fullName evidence="2">50S ribosomal protein L34</fullName>
    </alternativeName>
</protein>
<reference key="1">
    <citation type="journal article" date="2006" name="J. Bacteriol.">
        <title>Chromosome rearrangement and diversification of Francisella tularensis revealed by the type B (OSU18) genome sequence.</title>
        <authorList>
            <person name="Petrosino J.F."/>
            <person name="Xiang Q."/>
            <person name="Karpathy S.E."/>
            <person name="Jiang H."/>
            <person name="Yerrapragada S."/>
            <person name="Liu Y."/>
            <person name="Gioia J."/>
            <person name="Hemphill L."/>
            <person name="Gonzalez A."/>
            <person name="Raghavan T.M."/>
            <person name="Uzman A."/>
            <person name="Fox G.E."/>
            <person name="Highlander S."/>
            <person name="Reichard M."/>
            <person name="Morton R.J."/>
            <person name="Clinkenbeard K.D."/>
            <person name="Weinstock G.M."/>
        </authorList>
    </citation>
    <scope>NUCLEOTIDE SEQUENCE [LARGE SCALE GENOMIC DNA]</scope>
    <source>
        <strain>OSU18</strain>
    </source>
</reference>
<organism>
    <name type="scientific">Francisella tularensis subsp. holarctica (strain OSU18)</name>
    <dbReference type="NCBI Taxonomy" id="393011"/>
    <lineage>
        <taxon>Bacteria</taxon>
        <taxon>Pseudomonadati</taxon>
        <taxon>Pseudomonadota</taxon>
        <taxon>Gammaproteobacteria</taxon>
        <taxon>Thiotrichales</taxon>
        <taxon>Francisellaceae</taxon>
        <taxon>Francisella</taxon>
    </lineage>
</organism>